<comment type="function">
    <text evidence="1">CRISPR (clustered regularly interspaced short palindromic repeat), is an adaptive immune system that provides protection against mobile genetic elements (viruses, transposable elements and conjugative plasmids). CRISPR clusters contain spacers, sequences complementary to antecedent mobile elements, and target invading nucleic acids. CRISPR clusters are transcribed and processed into CRISPR RNA (crRNA). Acts as a dsDNA endonuclease. Involved in the integration of spacer DNA into the CRISPR cassette.</text>
</comment>
<comment type="cofactor">
    <cofactor evidence="1">
        <name>Mg(2+)</name>
        <dbReference type="ChEBI" id="CHEBI:18420"/>
    </cofactor>
    <cofactor evidence="1">
        <name>Mn(2+)</name>
        <dbReference type="ChEBI" id="CHEBI:29035"/>
    </cofactor>
</comment>
<comment type="subunit">
    <text evidence="1">Homodimer, forms a heterotetramer with a Cas2 homodimer.</text>
</comment>
<comment type="similarity">
    <text evidence="1">Belongs to the CRISPR-associated endonuclease Cas1 family.</text>
</comment>
<evidence type="ECO:0000255" key="1">
    <source>
        <dbReference type="HAMAP-Rule" id="MF_01470"/>
    </source>
</evidence>
<proteinExistence type="inferred from homology"/>
<organism>
    <name type="scientific">Leptospira interrogans serogroup Icterohaemorrhagiae serovar Lai (strain 56601)</name>
    <dbReference type="NCBI Taxonomy" id="189518"/>
    <lineage>
        <taxon>Bacteria</taxon>
        <taxon>Pseudomonadati</taxon>
        <taxon>Spirochaetota</taxon>
        <taxon>Spirochaetia</taxon>
        <taxon>Leptospirales</taxon>
        <taxon>Leptospiraceae</taxon>
        <taxon>Leptospira</taxon>
    </lineage>
</organism>
<feature type="chain" id="PRO_0000417079" description="CRISPR-associated endonuclease Cas1">
    <location>
        <begin position="1"/>
        <end position="254"/>
    </location>
</feature>
<feature type="binding site" evidence="1">
    <location>
        <position position="78"/>
    </location>
    <ligand>
        <name>Mn(2+)</name>
        <dbReference type="ChEBI" id="CHEBI:29035"/>
    </ligand>
</feature>
<feature type="binding site" evidence="1">
    <location>
        <position position="146"/>
    </location>
    <ligand>
        <name>Mn(2+)</name>
        <dbReference type="ChEBI" id="CHEBI:29035"/>
    </ligand>
</feature>
<feature type="binding site" evidence="1">
    <location>
        <position position="161"/>
    </location>
    <ligand>
        <name>Mn(2+)</name>
        <dbReference type="ChEBI" id="CHEBI:29035"/>
    </ligand>
</feature>
<protein>
    <recommendedName>
        <fullName evidence="1">CRISPR-associated endonuclease Cas1</fullName>
        <ecNumber evidence="1">3.1.-.-</ecNumber>
    </recommendedName>
</protein>
<accession>Q8F874</accession>
<name>CAS1_LEPIN</name>
<keyword id="KW-0051">Antiviral defense</keyword>
<keyword id="KW-0238">DNA-binding</keyword>
<keyword id="KW-0255">Endonuclease</keyword>
<keyword id="KW-0378">Hydrolase</keyword>
<keyword id="KW-0460">Magnesium</keyword>
<keyword id="KW-0464">Manganese</keyword>
<keyword id="KW-0479">Metal-binding</keyword>
<keyword id="KW-0540">Nuclease</keyword>
<keyword id="KW-1185">Reference proteome</keyword>
<dbReference type="EC" id="3.1.-.-" evidence="1"/>
<dbReference type="EMBL" id="AE010300">
    <property type="protein sequence ID" value="AAN47883.1"/>
    <property type="molecule type" value="Genomic_DNA"/>
</dbReference>
<dbReference type="RefSeq" id="NP_710865.1">
    <property type="nucleotide sequence ID" value="NC_004342.2"/>
</dbReference>
<dbReference type="SMR" id="Q8F874"/>
<dbReference type="STRING" id="189518.LA_0684"/>
<dbReference type="PaxDb" id="189518-LA_0684"/>
<dbReference type="EnsemblBacteria" id="AAN47883">
    <property type="protein sequence ID" value="AAN47883"/>
    <property type="gene ID" value="LA_0684"/>
</dbReference>
<dbReference type="KEGG" id="lil:LA_0684"/>
<dbReference type="PATRIC" id="fig|189518.3.peg.686"/>
<dbReference type="HOGENOM" id="CLU_052779_3_0_12"/>
<dbReference type="InParanoid" id="Q8F874"/>
<dbReference type="OrthoDB" id="9803119at2"/>
<dbReference type="Proteomes" id="UP000001408">
    <property type="component" value="Chromosome I"/>
</dbReference>
<dbReference type="GO" id="GO:0003677">
    <property type="term" value="F:DNA binding"/>
    <property type="evidence" value="ECO:0007669"/>
    <property type="project" value="UniProtKB-KW"/>
</dbReference>
<dbReference type="GO" id="GO:0004519">
    <property type="term" value="F:endonuclease activity"/>
    <property type="evidence" value="ECO:0000318"/>
    <property type="project" value="GO_Central"/>
</dbReference>
<dbReference type="GO" id="GO:0046872">
    <property type="term" value="F:metal ion binding"/>
    <property type="evidence" value="ECO:0007669"/>
    <property type="project" value="UniProtKB-UniRule"/>
</dbReference>
<dbReference type="GO" id="GO:0099048">
    <property type="term" value="P:CRISPR-cas system"/>
    <property type="evidence" value="ECO:0000318"/>
    <property type="project" value="GO_Central"/>
</dbReference>
<dbReference type="GO" id="GO:0051607">
    <property type="term" value="P:defense response to virus"/>
    <property type="evidence" value="ECO:0007669"/>
    <property type="project" value="UniProtKB-UniRule"/>
</dbReference>
<dbReference type="GO" id="GO:0043571">
    <property type="term" value="P:maintenance of CRISPR repeat elements"/>
    <property type="evidence" value="ECO:0000318"/>
    <property type="project" value="GO_Central"/>
</dbReference>
<dbReference type="Gene3D" id="1.20.120.920">
    <property type="entry name" value="CRISPR-associated endonuclease Cas1, C-terminal domain"/>
    <property type="match status" value="1"/>
</dbReference>
<dbReference type="HAMAP" id="MF_01470">
    <property type="entry name" value="Cas1"/>
    <property type="match status" value="1"/>
</dbReference>
<dbReference type="InterPro" id="IPR050646">
    <property type="entry name" value="Cas1"/>
</dbReference>
<dbReference type="InterPro" id="IPR002729">
    <property type="entry name" value="CRISPR-assoc_Cas1"/>
</dbReference>
<dbReference type="InterPro" id="IPR042206">
    <property type="entry name" value="CRISPR-assoc_Cas1_C"/>
</dbReference>
<dbReference type="NCBIfam" id="TIGR00287">
    <property type="entry name" value="cas1"/>
    <property type="match status" value="1"/>
</dbReference>
<dbReference type="PANTHER" id="PTHR34353">
    <property type="entry name" value="CRISPR-ASSOCIATED ENDONUCLEASE CAS1 1"/>
    <property type="match status" value="1"/>
</dbReference>
<dbReference type="PANTHER" id="PTHR34353:SF2">
    <property type="entry name" value="CRISPR-ASSOCIATED ENDONUCLEASE CAS1 1"/>
    <property type="match status" value="1"/>
</dbReference>
<dbReference type="Pfam" id="PF01867">
    <property type="entry name" value="Cas_Cas1"/>
    <property type="match status" value="1"/>
</dbReference>
<gene>
    <name evidence="1" type="primary">cas1</name>
    <name type="ordered locus">LA_0684</name>
</gene>
<sequence length="254" mass="29804">MIRKAQFKKSEIEKFRLEIARSIVAGKLQNCRSVLSRTARKSKNESEKQDIKEAIGKIEKNISLLEKAESIESIRGYEGASAKTYFSVFDYCIIQQKEDFQFHKRTRRPPRSRTNALLSFLYSLLTNDCIAVCQAVGLDPYIGFLHDERPGRPSLALDMMEEFRPFIDRLVFTLINRKQIQVSDFLEKPGSVFFINDDSRKELIKSYQERKKEEIFHPWLNIKSTVGELPYLQARIFARTLRGDLKYYIPFIWK</sequence>
<reference key="1">
    <citation type="journal article" date="2003" name="Nature">
        <title>Unique physiological and pathogenic features of Leptospira interrogans revealed by whole-genome sequencing.</title>
        <authorList>
            <person name="Ren S.-X."/>
            <person name="Fu G."/>
            <person name="Jiang X.-G."/>
            <person name="Zeng R."/>
            <person name="Miao Y.-G."/>
            <person name="Xu H."/>
            <person name="Zhang Y.-X."/>
            <person name="Xiong H."/>
            <person name="Lu G."/>
            <person name="Lu L.-F."/>
            <person name="Jiang H.-Q."/>
            <person name="Jia J."/>
            <person name="Tu Y.-F."/>
            <person name="Jiang J.-X."/>
            <person name="Gu W.-Y."/>
            <person name="Zhang Y.-Q."/>
            <person name="Cai Z."/>
            <person name="Sheng H.-H."/>
            <person name="Yin H.-F."/>
            <person name="Zhang Y."/>
            <person name="Zhu G.-F."/>
            <person name="Wan M."/>
            <person name="Huang H.-L."/>
            <person name="Qian Z."/>
            <person name="Wang S.-Y."/>
            <person name="Ma W."/>
            <person name="Yao Z.-J."/>
            <person name="Shen Y."/>
            <person name="Qiang B.-Q."/>
            <person name="Xia Q.-C."/>
            <person name="Guo X.-K."/>
            <person name="Danchin A."/>
            <person name="Saint Girons I."/>
            <person name="Somerville R.L."/>
            <person name="Wen Y.-M."/>
            <person name="Shi M.-H."/>
            <person name="Chen Z."/>
            <person name="Xu J.-G."/>
            <person name="Zhao G.-P."/>
        </authorList>
    </citation>
    <scope>NUCLEOTIDE SEQUENCE [LARGE SCALE GENOMIC DNA]</scope>
    <source>
        <strain>56601</strain>
    </source>
</reference>